<comment type="subcellular location">
    <subcellularLocation>
        <location>Plastid</location>
        <location>Chloroplast</location>
    </subcellularLocation>
</comment>
<comment type="RNA editing">
    <location>
        <position position="29" evidence="1 2"/>
    </location>
    <location>
        <position position="36" evidence="1 2"/>
    </location>
    <location>
        <position position="53" evidence="1 2"/>
    </location>
    <location>
        <position position="105" evidence="1 2"/>
    </location>
    <location>
        <position position="121" evidence="1 2"/>
    </location>
    <location>
        <position position="162" evidence="1 2"/>
    </location>
    <location>
        <position position="166" evidence="1 2"/>
    </location>
    <location>
        <position position="170" evidence="1 2"/>
    </location>
    <location>
        <position position="171" evidence="1 2"/>
    </location>
    <location>
        <position position="183" evidence="1 2"/>
    </location>
    <location>
        <position position="197" evidence="1 2"/>
    </location>
    <location>
        <position position="213" evidence="1 2"/>
    </location>
    <location>
        <position position="214" evidence="1 2"/>
    </location>
    <location>
        <position position="218" evidence="1 2"/>
    </location>
    <location>
        <position position="221" evidence="1 2"/>
    </location>
    <location>
        <position position="225" evidence="1 2"/>
    </location>
    <location>
        <position position="226" evidence="1 2"/>
    </location>
    <text>The nonsense codons at positions 170, 171 and 226 are modified to sense codons.</text>
</comment>
<comment type="similarity">
    <text evidence="3">Belongs to the universal ribosomal protein uS2 family.</text>
</comment>
<accession>Q85AW7</accession>
<dbReference type="EMBL" id="AB086179">
    <property type="protein sequence ID" value="BAC55329.1"/>
    <property type="molecule type" value="Genomic_DNA"/>
</dbReference>
<dbReference type="EMBL" id="AB087421">
    <property type="protein sequence ID" value="BAC55420.1"/>
    <property type="molecule type" value="mRNA"/>
</dbReference>
<dbReference type="RefSeq" id="NP_777393.1">
    <property type="nucleotide sequence ID" value="NC_004543.1"/>
</dbReference>
<dbReference type="SMR" id="Q85AW7"/>
<dbReference type="GeneID" id="2553432"/>
<dbReference type="GO" id="GO:0009507">
    <property type="term" value="C:chloroplast"/>
    <property type="evidence" value="ECO:0007669"/>
    <property type="project" value="UniProtKB-SubCell"/>
</dbReference>
<dbReference type="GO" id="GO:0005763">
    <property type="term" value="C:mitochondrial small ribosomal subunit"/>
    <property type="evidence" value="ECO:0007669"/>
    <property type="project" value="TreeGrafter"/>
</dbReference>
<dbReference type="GO" id="GO:0003735">
    <property type="term" value="F:structural constituent of ribosome"/>
    <property type="evidence" value="ECO:0007669"/>
    <property type="project" value="InterPro"/>
</dbReference>
<dbReference type="GO" id="GO:0006412">
    <property type="term" value="P:translation"/>
    <property type="evidence" value="ECO:0007669"/>
    <property type="project" value="UniProtKB-UniRule"/>
</dbReference>
<dbReference type="CDD" id="cd01425">
    <property type="entry name" value="RPS2"/>
    <property type="match status" value="1"/>
</dbReference>
<dbReference type="FunFam" id="1.10.287.610:FF:000001">
    <property type="entry name" value="30S ribosomal protein S2"/>
    <property type="match status" value="1"/>
</dbReference>
<dbReference type="Gene3D" id="3.40.50.10490">
    <property type="entry name" value="Glucose-6-phosphate isomerase like protein, domain 1"/>
    <property type="match status" value="1"/>
</dbReference>
<dbReference type="Gene3D" id="1.10.287.610">
    <property type="entry name" value="Helix hairpin bin"/>
    <property type="match status" value="1"/>
</dbReference>
<dbReference type="HAMAP" id="MF_00291_B">
    <property type="entry name" value="Ribosomal_uS2_B"/>
    <property type="match status" value="1"/>
</dbReference>
<dbReference type="InterPro" id="IPR001865">
    <property type="entry name" value="Ribosomal_uS2"/>
</dbReference>
<dbReference type="InterPro" id="IPR005706">
    <property type="entry name" value="Ribosomal_uS2_bac/mit/plastid"/>
</dbReference>
<dbReference type="InterPro" id="IPR018130">
    <property type="entry name" value="Ribosomal_uS2_CS"/>
</dbReference>
<dbReference type="InterPro" id="IPR023591">
    <property type="entry name" value="Ribosomal_uS2_flav_dom_sf"/>
</dbReference>
<dbReference type="NCBIfam" id="TIGR01011">
    <property type="entry name" value="rpsB_bact"/>
    <property type="match status" value="1"/>
</dbReference>
<dbReference type="PANTHER" id="PTHR12534">
    <property type="entry name" value="30S RIBOSOMAL PROTEIN S2 PROKARYOTIC AND ORGANELLAR"/>
    <property type="match status" value="1"/>
</dbReference>
<dbReference type="PANTHER" id="PTHR12534:SF0">
    <property type="entry name" value="SMALL RIBOSOMAL SUBUNIT PROTEIN US2M"/>
    <property type="match status" value="1"/>
</dbReference>
<dbReference type="Pfam" id="PF00318">
    <property type="entry name" value="Ribosomal_S2"/>
    <property type="match status" value="1"/>
</dbReference>
<dbReference type="PRINTS" id="PR00395">
    <property type="entry name" value="RIBOSOMALS2"/>
</dbReference>
<dbReference type="SUPFAM" id="SSF52313">
    <property type="entry name" value="Ribosomal protein S2"/>
    <property type="match status" value="1"/>
</dbReference>
<dbReference type="PROSITE" id="PS00963">
    <property type="entry name" value="RIBOSOMAL_S2_2"/>
    <property type="match status" value="1"/>
</dbReference>
<protein>
    <recommendedName>
        <fullName evidence="3">Small ribosomal subunit protein uS2c</fullName>
    </recommendedName>
    <alternativeName>
        <fullName>30S ribosomal protein S2, chloroplastic</fullName>
    </alternativeName>
</protein>
<name>RR2_ANTAG</name>
<feature type="chain" id="PRO_0000134287" description="Small ribosomal subunit protein uS2c">
    <location>
        <begin position="1"/>
        <end position="235"/>
    </location>
</feature>
<gene>
    <name type="primary">rps2</name>
</gene>
<organism>
    <name type="scientific">Anthoceros angustus</name>
    <name type="common">Hornwort</name>
    <name type="synonym">Anthoceros formosae</name>
    <dbReference type="NCBI Taxonomy" id="48387"/>
    <lineage>
        <taxon>Eukaryota</taxon>
        <taxon>Viridiplantae</taxon>
        <taxon>Streptophyta</taxon>
        <taxon>Embryophyta</taxon>
        <taxon>Anthocerotophyta</taxon>
        <taxon>Anthocerotopsida</taxon>
        <taxon>Anthocerotidae</taxon>
        <taxon>Anthocerotales</taxon>
        <taxon>Anthocerotaceae</taxon>
        <taxon>Anthoceros</taxon>
    </lineage>
</organism>
<proteinExistence type="evidence at transcript level"/>
<geneLocation type="chloroplast"/>
<keyword id="KW-0150">Chloroplast</keyword>
<keyword id="KW-0934">Plastid</keyword>
<keyword id="KW-0687">Ribonucleoprotein</keyword>
<keyword id="KW-0689">Ribosomal protein</keyword>
<keyword id="KW-0691">RNA editing</keyword>
<reference key="1">
    <citation type="journal article" date="2003" name="Nucleic Acids Res.">
        <title>The complete nucleotide sequence of the hornwort (Anthoceros formosae) chloroplast genome: insight into the earliest land plants.</title>
        <authorList>
            <person name="Kugita M."/>
            <person name="Kaneko A."/>
            <person name="Yamamoto Y."/>
            <person name="Takeya Y."/>
            <person name="Matsumoto T."/>
            <person name="Yoshinaga K."/>
        </authorList>
    </citation>
    <scope>NUCLEOTIDE SEQUENCE [LARGE SCALE GENOMIC DNA]</scope>
    <scope>RNA EDITING</scope>
</reference>
<reference key="2">
    <citation type="journal article" date="2003" name="Nucleic Acids Res.">
        <title>RNA editing in hornwort chloroplasts makes more than half the genes functional.</title>
        <authorList>
            <person name="Kugita M."/>
            <person name="Yamamoto Y."/>
            <person name="Fujikawa T."/>
            <person name="Matsumoto T."/>
            <person name="Yoshinaga K."/>
        </authorList>
    </citation>
    <scope>NUCLEOTIDE SEQUENCE [MRNA]</scope>
    <scope>RNA EDITING</scope>
    <source>
        <tissue>Thallus</tissue>
    </source>
</reference>
<sequence length="235" mass="26666">MKQKYWNINLEEMMEAGIHFGHQAAKWNPKMKPYIFTERRGIHILNVTKTARLLSEACDFVANAASKGKQFLIVGTKYQAADLVASAALKARCHYVNQKWLGGMLTNWSTIEKRLRKFEDLQTKKNMGALDELPKKEAANLERQLAQLQKYLGGIRYMTNLPDIVIIVDQQKELTAIRECINLNIPTICLVDTDCDPDLTDISIPANDDARASIRWVLDKLTSAIQEGRCNSTKI</sequence>
<evidence type="ECO:0000269" key="1">
    <source>
    </source>
</evidence>
<evidence type="ECO:0000269" key="2">
    <source>
    </source>
</evidence>
<evidence type="ECO:0000305" key="3"/>